<feature type="signal peptide" evidence="5">
    <location>
        <begin position="1"/>
        <end position="25"/>
    </location>
</feature>
<feature type="chain" id="PRO_0000018386" description="Non-specific lipid-transfer protein Cw18">
    <location>
        <begin position="26"/>
        <end position="115"/>
    </location>
</feature>
<feature type="disulfide bond" evidence="1">
    <location>
        <begin position="29"/>
        <end position="77"/>
    </location>
</feature>
<feature type="disulfide bond" evidence="1">
    <location>
        <begin position="39"/>
        <end position="54"/>
    </location>
</feature>
<feature type="disulfide bond" evidence="1">
    <location>
        <begin position="55"/>
        <end position="97"/>
    </location>
</feature>
<feature type="disulfide bond" evidence="1">
    <location>
        <begin position="75"/>
        <end position="111"/>
    </location>
</feature>
<protein>
    <recommendedName>
        <fullName>Non-specific lipid-transfer protein Cw18</fullName>
        <shortName>LTP Cw-18</shortName>
    </recommendedName>
    <alternativeName>
        <fullName>PKG2316</fullName>
    </alternativeName>
</protein>
<sequence length="115" mass="11221">MARTAATKLALVALVAAMLLVAADAAITCGQVSSALGPCAAYAKGSGTSPSAGCCSGVKRLAGLARSTADKQATCRCLKSVAGAYNAGRAAGIPSRCGVSVPYTISASVDCSKIH</sequence>
<organism>
    <name type="scientific">Hordeum vulgare</name>
    <name type="common">Barley</name>
    <dbReference type="NCBI Taxonomy" id="4513"/>
    <lineage>
        <taxon>Eukaryota</taxon>
        <taxon>Viridiplantae</taxon>
        <taxon>Streptophyta</taxon>
        <taxon>Embryophyta</taxon>
        <taxon>Tracheophyta</taxon>
        <taxon>Spermatophyta</taxon>
        <taxon>Magnoliopsida</taxon>
        <taxon>Liliopsida</taxon>
        <taxon>Poales</taxon>
        <taxon>Poaceae</taxon>
        <taxon>BOP clade</taxon>
        <taxon>Pooideae</taxon>
        <taxon>Triticodae</taxon>
        <taxon>Triticeae</taxon>
        <taxon>Hordeinae</taxon>
        <taxon>Hordeum</taxon>
    </lineage>
</organism>
<comment type="function">
    <text>Plant non-specific lipid-transfer proteins transfer phospholipids as well as galactolipids across membranes. May play a role in wax or cutin deposition in the cell walls of expanding epidermal cells and certain secretory tissues.</text>
</comment>
<comment type="tissue specificity">
    <text evidence="3">Highly expressed in leaves and coleoptiles. No expression in roots.</text>
</comment>
<comment type="induction">
    <text evidence="4">By NaCl, abscisic acid and inoculation with the fungal pathogen E.graminis.</text>
</comment>
<comment type="similarity">
    <text evidence="2">Belongs to the plant LTP family.</text>
</comment>
<reference key="1">
    <citation type="journal article" date="1993" name="Plant J.">
        <title>Developmental and pathogen-induced expression of three barley genes encoding lipid transfer proteins.</title>
        <authorList>
            <person name="Molina A."/>
            <person name="Garcia-Olmedo F."/>
        </authorList>
    </citation>
    <scope>NUCLEOTIDE SEQUENCE [MRNA]</scope>
    <scope>INDUCTION</scope>
    <source>
        <strain>cv. Bomi</strain>
        <tissue>Etiolated leaf</tissue>
    </source>
</reference>
<reference key="2">
    <citation type="journal article" date="1994" name="Planta">
        <title>Lipid transfer protein genes specifically expressed in barley leaves and coleoptiles.</title>
        <authorList>
            <person name="Gausing K."/>
        </authorList>
    </citation>
    <scope>NUCLEOTIDE SEQUENCE [MRNA]</scope>
    <scope>TISSUE SPECIFICITY</scope>
    <source>
        <strain>cv. Bomi</strain>
        <tissue>Leaf</tissue>
    </source>
</reference>
<reference key="3">
    <citation type="journal article" date="1993" name="FEBS Lett.">
        <title>Lipid transfer proteins (nsLTPs) from barley and maize leaves are potent inhibitors of bacterial and fungal plant pathogens.</title>
        <authorList>
            <person name="Molina A."/>
            <person name="Segura A."/>
            <person name="Garcia-Olmedo F."/>
        </authorList>
    </citation>
    <scope>PROTEIN SEQUENCE OF 26-115</scope>
    <source>
        <strain>cv. Bomi</strain>
        <tissue>Leaf</tissue>
    </source>
</reference>
<gene>
    <name type="primary">CW18</name>
    <name type="synonym">LTP2</name>
</gene>
<evidence type="ECO:0000250" key="1">
    <source>
        <dbReference type="UniProtKB" id="P07597"/>
    </source>
</evidence>
<evidence type="ECO:0000255" key="2"/>
<evidence type="ECO:0000269" key="3">
    <source>
    </source>
</evidence>
<evidence type="ECO:0000269" key="4">
    <source>
    </source>
</evidence>
<evidence type="ECO:0000269" key="5">
    <source>
    </source>
</evidence>
<accession>Q43871</accession>
<dbReference type="EMBL" id="X68655">
    <property type="protein sequence ID" value="CAA48622.1"/>
    <property type="molecule type" value="mRNA"/>
</dbReference>
<dbReference type="EMBL" id="Z37114">
    <property type="protein sequence ID" value="CAA85483.1"/>
    <property type="molecule type" value="mRNA"/>
</dbReference>
<dbReference type="PIR" id="S45370">
    <property type="entry name" value="S45370"/>
</dbReference>
<dbReference type="SMR" id="Q43871"/>
<dbReference type="OMA" id="RCNTSIC"/>
<dbReference type="ExpressionAtlas" id="Q43871">
    <property type="expression patterns" value="baseline and differential"/>
</dbReference>
<dbReference type="GO" id="GO:0008289">
    <property type="term" value="F:lipid binding"/>
    <property type="evidence" value="ECO:0007669"/>
    <property type="project" value="UniProtKB-KW"/>
</dbReference>
<dbReference type="GO" id="GO:0006869">
    <property type="term" value="P:lipid transport"/>
    <property type="evidence" value="ECO:0007669"/>
    <property type="project" value="InterPro"/>
</dbReference>
<dbReference type="CDD" id="cd01960">
    <property type="entry name" value="nsLTP1"/>
    <property type="match status" value="1"/>
</dbReference>
<dbReference type="Gene3D" id="1.10.110.10">
    <property type="entry name" value="Plant lipid-transfer and hydrophobic proteins"/>
    <property type="match status" value="1"/>
</dbReference>
<dbReference type="InterPro" id="IPR036312">
    <property type="entry name" value="Bifun_inhib/LTP/seed_sf"/>
</dbReference>
<dbReference type="InterPro" id="IPR016140">
    <property type="entry name" value="Bifunc_inhib/LTP/seed_store"/>
</dbReference>
<dbReference type="InterPro" id="IPR000528">
    <property type="entry name" value="Plant_nsLTP"/>
</dbReference>
<dbReference type="PANTHER" id="PTHR33076">
    <property type="entry name" value="NON-SPECIFIC LIPID-TRANSFER PROTEIN 2-RELATED"/>
    <property type="match status" value="1"/>
</dbReference>
<dbReference type="Pfam" id="PF00234">
    <property type="entry name" value="Tryp_alpha_amyl"/>
    <property type="match status" value="1"/>
</dbReference>
<dbReference type="PRINTS" id="PR00382">
    <property type="entry name" value="LIPIDTRNSFER"/>
</dbReference>
<dbReference type="SMART" id="SM00499">
    <property type="entry name" value="AAI"/>
    <property type="match status" value="1"/>
</dbReference>
<dbReference type="SUPFAM" id="SSF47699">
    <property type="entry name" value="Bifunctional inhibitor/lipid-transfer protein/seed storage 2S albumin"/>
    <property type="match status" value="1"/>
</dbReference>
<dbReference type="PROSITE" id="PS00597">
    <property type="entry name" value="PLANT_LTP"/>
    <property type="match status" value="1"/>
</dbReference>
<keyword id="KW-0903">Direct protein sequencing</keyword>
<keyword id="KW-1015">Disulfide bond</keyword>
<keyword id="KW-0446">Lipid-binding</keyword>
<keyword id="KW-0732">Signal</keyword>
<keyword id="KW-0813">Transport</keyword>
<proteinExistence type="evidence at protein level"/>
<name>NLTP8_HORVU</name>